<evidence type="ECO:0000255" key="1">
    <source>
        <dbReference type="HAMAP-Rule" id="MF_00057"/>
    </source>
</evidence>
<organism>
    <name type="scientific">Pectobacterium carotovorum subsp. carotovorum (strain PC1)</name>
    <dbReference type="NCBI Taxonomy" id="561230"/>
    <lineage>
        <taxon>Bacteria</taxon>
        <taxon>Pseudomonadati</taxon>
        <taxon>Pseudomonadota</taxon>
        <taxon>Gammaproteobacteria</taxon>
        <taxon>Enterobacterales</taxon>
        <taxon>Pectobacteriaceae</taxon>
        <taxon>Pectobacterium</taxon>
    </lineage>
</organism>
<feature type="chain" id="PRO_1000202344" description="3-deoxy-manno-octulosonate cytidylyltransferase">
    <location>
        <begin position="1"/>
        <end position="250"/>
    </location>
</feature>
<gene>
    <name evidence="1" type="primary">kdsB</name>
    <name type="ordered locus">PC1_1772</name>
</gene>
<keyword id="KW-0963">Cytoplasm</keyword>
<keyword id="KW-0448">Lipopolysaccharide biosynthesis</keyword>
<keyword id="KW-0548">Nucleotidyltransferase</keyword>
<keyword id="KW-0808">Transferase</keyword>
<dbReference type="EC" id="2.7.7.38" evidence="1"/>
<dbReference type="EMBL" id="CP001657">
    <property type="protein sequence ID" value="ACT12813.1"/>
    <property type="molecule type" value="Genomic_DNA"/>
</dbReference>
<dbReference type="RefSeq" id="WP_015840021.1">
    <property type="nucleotide sequence ID" value="NC_012917.1"/>
</dbReference>
<dbReference type="SMR" id="C6DFA4"/>
<dbReference type="STRING" id="561230.PC1_1772"/>
<dbReference type="GeneID" id="67793773"/>
<dbReference type="KEGG" id="pct:PC1_1772"/>
<dbReference type="eggNOG" id="COG1212">
    <property type="taxonomic scope" value="Bacteria"/>
</dbReference>
<dbReference type="HOGENOM" id="CLU_065038_1_0_6"/>
<dbReference type="OrthoDB" id="9815559at2"/>
<dbReference type="UniPathway" id="UPA00030"/>
<dbReference type="UniPathway" id="UPA00358">
    <property type="reaction ID" value="UER00476"/>
</dbReference>
<dbReference type="Proteomes" id="UP000002736">
    <property type="component" value="Chromosome"/>
</dbReference>
<dbReference type="GO" id="GO:0005829">
    <property type="term" value="C:cytosol"/>
    <property type="evidence" value="ECO:0007669"/>
    <property type="project" value="TreeGrafter"/>
</dbReference>
<dbReference type="GO" id="GO:0008690">
    <property type="term" value="F:3-deoxy-manno-octulosonate cytidylyltransferase activity"/>
    <property type="evidence" value="ECO:0007669"/>
    <property type="project" value="UniProtKB-UniRule"/>
</dbReference>
<dbReference type="GO" id="GO:0033468">
    <property type="term" value="P:CMP-keto-3-deoxy-D-manno-octulosonic acid biosynthetic process"/>
    <property type="evidence" value="ECO:0007669"/>
    <property type="project" value="UniProtKB-UniRule"/>
</dbReference>
<dbReference type="GO" id="GO:0009103">
    <property type="term" value="P:lipopolysaccharide biosynthetic process"/>
    <property type="evidence" value="ECO:0007669"/>
    <property type="project" value="UniProtKB-UniRule"/>
</dbReference>
<dbReference type="CDD" id="cd02517">
    <property type="entry name" value="CMP-KDO-Synthetase"/>
    <property type="match status" value="1"/>
</dbReference>
<dbReference type="FunFam" id="3.90.550.10:FF:000011">
    <property type="entry name" value="3-deoxy-manno-octulosonate cytidylyltransferase"/>
    <property type="match status" value="1"/>
</dbReference>
<dbReference type="Gene3D" id="3.90.550.10">
    <property type="entry name" value="Spore Coat Polysaccharide Biosynthesis Protein SpsA, Chain A"/>
    <property type="match status" value="1"/>
</dbReference>
<dbReference type="HAMAP" id="MF_00057">
    <property type="entry name" value="KdsB"/>
    <property type="match status" value="1"/>
</dbReference>
<dbReference type="InterPro" id="IPR003329">
    <property type="entry name" value="Cytidylyl_trans"/>
</dbReference>
<dbReference type="InterPro" id="IPR004528">
    <property type="entry name" value="KdsB"/>
</dbReference>
<dbReference type="InterPro" id="IPR029044">
    <property type="entry name" value="Nucleotide-diphossugar_trans"/>
</dbReference>
<dbReference type="NCBIfam" id="TIGR00466">
    <property type="entry name" value="kdsB"/>
    <property type="match status" value="1"/>
</dbReference>
<dbReference type="NCBIfam" id="NF003950">
    <property type="entry name" value="PRK05450.1-3"/>
    <property type="match status" value="1"/>
</dbReference>
<dbReference type="NCBIfam" id="NF003952">
    <property type="entry name" value="PRK05450.1-5"/>
    <property type="match status" value="1"/>
</dbReference>
<dbReference type="NCBIfam" id="NF009905">
    <property type="entry name" value="PRK13368.1"/>
    <property type="match status" value="1"/>
</dbReference>
<dbReference type="PANTHER" id="PTHR42866">
    <property type="entry name" value="3-DEOXY-MANNO-OCTULOSONATE CYTIDYLYLTRANSFERASE"/>
    <property type="match status" value="1"/>
</dbReference>
<dbReference type="PANTHER" id="PTHR42866:SF2">
    <property type="entry name" value="3-DEOXY-MANNO-OCTULOSONATE CYTIDYLYLTRANSFERASE, MITOCHONDRIAL"/>
    <property type="match status" value="1"/>
</dbReference>
<dbReference type="Pfam" id="PF02348">
    <property type="entry name" value="CTP_transf_3"/>
    <property type="match status" value="1"/>
</dbReference>
<dbReference type="SUPFAM" id="SSF53448">
    <property type="entry name" value="Nucleotide-diphospho-sugar transferases"/>
    <property type="match status" value="1"/>
</dbReference>
<comment type="function">
    <text evidence="1">Activates KDO (a required 8-carbon sugar) for incorporation into bacterial lipopolysaccharide in Gram-negative bacteria.</text>
</comment>
<comment type="catalytic activity">
    <reaction evidence="1">
        <text>3-deoxy-alpha-D-manno-oct-2-ulosonate + CTP = CMP-3-deoxy-beta-D-manno-octulosonate + diphosphate</text>
        <dbReference type="Rhea" id="RHEA:23448"/>
        <dbReference type="ChEBI" id="CHEBI:33019"/>
        <dbReference type="ChEBI" id="CHEBI:37563"/>
        <dbReference type="ChEBI" id="CHEBI:85986"/>
        <dbReference type="ChEBI" id="CHEBI:85987"/>
        <dbReference type="EC" id="2.7.7.38"/>
    </reaction>
</comment>
<comment type="pathway">
    <text evidence="1">Nucleotide-sugar biosynthesis; CMP-3-deoxy-D-manno-octulosonate biosynthesis; CMP-3-deoxy-D-manno-octulosonate from 3-deoxy-D-manno-octulosonate and CTP: step 1/1.</text>
</comment>
<comment type="pathway">
    <text evidence="1">Bacterial outer membrane biogenesis; lipopolysaccharide biosynthesis.</text>
</comment>
<comment type="subcellular location">
    <subcellularLocation>
        <location evidence="1">Cytoplasm</location>
    </subcellularLocation>
</comment>
<comment type="similarity">
    <text evidence="1">Belongs to the KdsB family.</text>
</comment>
<name>KDSB_PECCP</name>
<proteinExistence type="inferred from homology"/>
<protein>
    <recommendedName>
        <fullName evidence="1">3-deoxy-manno-octulosonate cytidylyltransferase</fullName>
        <ecNumber evidence="1">2.7.7.38</ecNumber>
    </recommendedName>
    <alternativeName>
        <fullName evidence="1">CMP-2-keto-3-deoxyoctulosonic acid synthase</fullName>
        <shortName evidence="1">CKS</shortName>
        <shortName evidence="1">CMP-KDO synthase</shortName>
    </alternativeName>
</protein>
<reference key="1">
    <citation type="submission" date="2009-07" db="EMBL/GenBank/DDBJ databases">
        <title>Complete sequence of Pectobacterium carotovorum subsp. carotovorum PC1.</title>
        <authorList>
            <consortium name="US DOE Joint Genome Institute"/>
            <person name="Lucas S."/>
            <person name="Copeland A."/>
            <person name="Lapidus A."/>
            <person name="Glavina del Rio T."/>
            <person name="Tice H."/>
            <person name="Bruce D."/>
            <person name="Goodwin L."/>
            <person name="Pitluck S."/>
            <person name="Munk A.C."/>
            <person name="Brettin T."/>
            <person name="Detter J.C."/>
            <person name="Han C."/>
            <person name="Tapia R."/>
            <person name="Larimer F."/>
            <person name="Land M."/>
            <person name="Hauser L."/>
            <person name="Kyrpides N."/>
            <person name="Mikhailova N."/>
            <person name="Balakrishnan V."/>
            <person name="Glasner J."/>
            <person name="Perna N.T."/>
        </authorList>
    </citation>
    <scope>NUCLEOTIDE SEQUENCE [LARGE SCALE GENOMIC DNA]</scope>
    <source>
        <strain>PC1</strain>
    </source>
</reference>
<sequence>MTYTVIIPARFASSRLPGKPLADINGKPMVVHVMERALESGAQRVIVATDHPDVETAVKQAGGEVCLTRADHNSGTERLAEVIERYGFTDDDIIVNVQGDEPLIPSVIIRQVAENLAASKAGMATLAVPIETSEEAFNPNAVKVVTDAEGYALYFSRATIPWDRERFAQSKETIGDHFLRHLGIYAYRAGFVRRYVSWAPSQLEQIELLEQLRVLWYGEKIHVAVAKAVPSVGVDTPEDLARVRHVMANR</sequence>
<accession>C6DFA4</accession>